<keyword id="KW-0002">3D-structure</keyword>
<keyword id="KW-1003">Cell membrane</keyword>
<keyword id="KW-0297">G-protein coupled receptor</keyword>
<keyword id="KW-0325">Glycoprotein</keyword>
<keyword id="KW-0449">Lipoprotein</keyword>
<keyword id="KW-0472">Membrane</keyword>
<keyword id="KW-0564">Palmitate</keyword>
<keyword id="KW-0675">Receptor</keyword>
<keyword id="KW-1185">Reference proteome</keyword>
<keyword id="KW-0807">Transducer</keyword>
<keyword id="KW-0812">Transmembrane</keyword>
<keyword id="KW-1133">Transmembrane helix</keyword>
<feature type="chain" id="PRO_0000069728" description="Melanocortin receptor 5">
    <location>
        <begin position="1"/>
        <end position="325"/>
    </location>
</feature>
<feature type="topological domain" description="Extracellular" evidence="1">
    <location>
        <begin position="1"/>
        <end position="37"/>
    </location>
</feature>
<feature type="transmembrane region" description="Helical; Name=1" evidence="1">
    <location>
        <begin position="38"/>
        <end position="61"/>
    </location>
</feature>
<feature type="topological domain" description="Cytoplasmic" evidence="1">
    <location>
        <begin position="62"/>
        <end position="73"/>
    </location>
</feature>
<feature type="transmembrane region" description="Helical; Name=2" evidence="1">
    <location>
        <begin position="74"/>
        <end position="97"/>
    </location>
</feature>
<feature type="topological domain" description="Extracellular" evidence="1">
    <location>
        <begin position="98"/>
        <end position="114"/>
    </location>
</feature>
<feature type="transmembrane region" description="Helical; Name=3" evidence="1">
    <location>
        <begin position="115"/>
        <end position="138"/>
    </location>
</feature>
<feature type="topological domain" description="Cytoplasmic" evidence="1">
    <location>
        <begin position="139"/>
        <end position="155"/>
    </location>
</feature>
<feature type="transmembrane region" description="Helical; Name=4" evidence="1">
    <location>
        <begin position="156"/>
        <end position="179"/>
    </location>
</feature>
<feature type="topological domain" description="Extracellular" evidence="1">
    <location>
        <begin position="180"/>
        <end position="186"/>
    </location>
</feature>
<feature type="transmembrane region" description="Helical; Name=5" evidence="1">
    <location>
        <begin position="187"/>
        <end position="211"/>
    </location>
</feature>
<feature type="topological domain" description="Cytoplasmic" evidence="1">
    <location>
        <begin position="212"/>
        <end position="239"/>
    </location>
</feature>
<feature type="transmembrane region" description="Helical; Name=6" evidence="1">
    <location>
        <begin position="240"/>
        <end position="265"/>
    </location>
</feature>
<feature type="topological domain" description="Extracellular" evidence="1">
    <location>
        <begin position="266"/>
        <end position="273"/>
    </location>
</feature>
<feature type="transmembrane region" description="Helical; Name=7" evidence="1">
    <location>
        <begin position="274"/>
        <end position="297"/>
    </location>
</feature>
<feature type="topological domain" description="Cytoplasmic" evidence="1">
    <location>
        <begin position="298"/>
        <end position="325"/>
    </location>
</feature>
<feature type="lipid moiety-binding region" description="S-palmitoyl cysteine" evidence="1">
    <location>
        <position position="311"/>
    </location>
</feature>
<feature type="lipid moiety-binding region" description="S-palmitoyl cysteine" evidence="1">
    <location>
        <position position="312"/>
    </location>
</feature>
<feature type="glycosylation site" description="N-linked (GlcNAc...) asparagine" evidence="1">
    <location>
        <position position="2"/>
    </location>
</feature>
<feature type="glycosylation site" description="N-linked (GlcNAc...) asparagine" evidence="1">
    <location>
        <position position="15"/>
    </location>
</feature>
<feature type="glycosylation site" description="N-linked (GlcNAc...) asparagine" evidence="1">
    <location>
        <position position="20"/>
    </location>
</feature>
<feature type="glycosylation site" description="N-linked (GlcNAc...) asparagine" evidence="1">
    <location>
        <position position="28"/>
    </location>
</feature>
<feature type="sequence variant" id="VAR_013128" description="In dbSNP:rs2236700." evidence="3 4">
    <original>F</original>
    <variation>L</variation>
    <location>
        <position position="209"/>
    </location>
</feature>
<feature type="mutagenesis site" description="10% increase of binding to alpha-MSH." evidence="5">
    <original>Q</original>
    <variation>K</variation>
    <location>
        <position position="235"/>
    </location>
</feature>
<feature type="mutagenesis site" description="690% increase of binding to alpha-MSH." evidence="5">
    <original>R</original>
    <variation>C</variation>
    <location>
        <position position="272"/>
    </location>
</feature>
<feature type="sequence conflict" description="In Ref. 2; AAA59566." evidence="6" ref="2">
    <original>R</original>
    <variation>A</variation>
    <location>
        <position position="149"/>
    </location>
</feature>
<feature type="sequence conflict" description="In Ref. 1." evidence="6" ref="1">
    <original>ALPGASSARQRTSM</original>
    <variation>LCPGPALRGRGPAW</variation>
    <location>
        <begin position="221"/>
        <end position="234"/>
    </location>
</feature>
<feature type="sequence conflict" description="In Ref. 2; AAA59566." evidence="6" ref="2">
    <original>F</original>
    <variation>Y</variation>
    <location>
        <position position="297"/>
    </location>
</feature>
<feature type="helix" evidence="8">
    <location>
        <begin position="40"/>
        <end position="43"/>
    </location>
</feature>
<feature type="helix" evidence="8">
    <location>
        <begin position="45"/>
        <end position="59"/>
    </location>
</feature>
<feature type="turn" evidence="8">
    <location>
        <begin position="60"/>
        <end position="63"/>
    </location>
</feature>
<feature type="strand" evidence="8">
    <location>
        <begin position="64"/>
        <end position="66"/>
    </location>
</feature>
<feature type="helix" evidence="8">
    <location>
        <begin position="70"/>
        <end position="100"/>
    </location>
</feature>
<feature type="helix" evidence="8">
    <location>
        <begin position="108"/>
        <end position="145"/>
    </location>
</feature>
<feature type="strand" evidence="8">
    <location>
        <begin position="148"/>
        <end position="150"/>
    </location>
</feature>
<feature type="turn" evidence="8">
    <location>
        <begin position="151"/>
        <end position="153"/>
    </location>
</feature>
<feature type="helix" evidence="8">
    <location>
        <begin position="156"/>
        <end position="179"/>
    </location>
</feature>
<feature type="turn" evidence="7">
    <location>
        <begin position="180"/>
        <end position="182"/>
    </location>
</feature>
<feature type="helix" evidence="8">
    <location>
        <begin position="184"/>
        <end position="219"/>
    </location>
</feature>
<feature type="strand" evidence="8">
    <location>
        <begin position="220"/>
        <end position="222"/>
    </location>
</feature>
<feature type="helix" evidence="8">
    <location>
        <begin position="234"/>
        <end position="246"/>
    </location>
</feature>
<feature type="turn" evidence="8">
    <location>
        <begin position="247"/>
        <end position="251"/>
    </location>
</feature>
<feature type="helix" evidence="8">
    <location>
        <begin position="253"/>
        <end position="260"/>
    </location>
</feature>
<feature type="turn" evidence="8">
    <location>
        <begin position="261"/>
        <end position="263"/>
    </location>
</feature>
<feature type="helix" evidence="8">
    <location>
        <begin position="268"/>
        <end position="274"/>
    </location>
</feature>
<feature type="helix" evidence="8">
    <location>
        <begin position="277"/>
        <end position="295"/>
    </location>
</feature>
<feature type="strand" evidence="8">
    <location>
        <begin position="297"/>
        <end position="299"/>
    </location>
</feature>
<feature type="helix" evidence="8">
    <location>
        <begin position="300"/>
        <end position="311"/>
    </location>
</feature>
<proteinExistence type="evidence at protein level"/>
<sequence>MNSSFHLHFLDLNLNATEGNLSGPNVKNKSSPCEDMGIAVEVFLTLGVISLLENILVIGAIVKNKNLHSPMYFFVCSLAVADMLVSMSSAWETITIYLLNNKHLVIADAFVRHIDNVFDSMICISVVASMCSLLAIAVDRYVTIFYALRYHHIMTARRSGAIIAGIWAFCTGCGIVFILYSESTYVILCLISMFFAMLFLLVSLYIHMFLLARTHVKRIAALPGASSARQRTSMQGAVTVTMLLGVFTVCWAPFFLHLTLMLSCPQNLYCSRFMSHFNMYLILIMCNSVMDPLIYAFRSQEMRKTFKEIICCRGFRIACSFPRRD</sequence>
<reference key="1">
    <citation type="journal article" date="1993" name="Biochem. Biophys. Res. Commun.">
        <title>Molecular cloning of a novel human melanocortin receptor.</title>
        <authorList>
            <person name="Chhajlani V."/>
            <person name="Muceniece R."/>
            <person name="Wikberg J.E.S."/>
        </authorList>
    </citation>
    <scope>NUCLEOTIDE SEQUENCE [GENOMIC DNA]</scope>
    <source>
        <tissue>Placenta</tissue>
    </source>
</reference>
<reference key="2">
    <citation type="journal article" date="1994" name="Biochem. Biophys. Res. Commun.">
        <title>Molecular cloning and characterization of the rat fifth melanocortin receptor.</title>
        <authorList>
            <person name="Griffon N."/>
            <person name="Mignon V."/>
            <person name="Facchinetti P."/>
            <person name="Diaz J."/>
            <person name="Schwartz J.-C."/>
            <person name="Sokoloff P."/>
        </authorList>
    </citation>
    <scope>NUCLEOTIDE SEQUENCE [GENOMIC DNA]</scope>
</reference>
<reference key="3">
    <citation type="journal article" date="1995" name="Neurochem. Res.">
        <title>Cloning, expression, and tissue distribution of a fifth melanocortin receptor subtype.</title>
        <authorList>
            <person name="Fathi Z."/>
            <person name="Iben L.G."/>
            <person name="Parker E.M."/>
        </authorList>
    </citation>
    <scope>NUCLEOTIDE SEQUENCE [GENOMIC DNA]</scope>
    <source>
        <tissue>Placenta</tissue>
    </source>
</reference>
<reference key="4">
    <citation type="submission" date="2003-04" db="EMBL/GenBank/DDBJ databases">
        <title>cDNA clones of human proteins involved in signal transduction sequenced by the Guthrie cDNA resource center (www.cdna.org).</title>
        <authorList>
            <person name="Kopatz S.A."/>
            <person name="Aronstam R.S."/>
            <person name="Sharma S.V."/>
        </authorList>
    </citation>
    <scope>NUCLEOTIDE SEQUENCE [LARGE SCALE MRNA]</scope>
</reference>
<reference key="5">
    <citation type="submission" date="2007-02" db="EMBL/GenBank/DDBJ databases">
        <authorList>
            <consortium name="NHLBI resequencing and genotyping service (RS&amp;G)"/>
        </authorList>
    </citation>
    <scope>NUCLEOTIDE SEQUENCE [GENOMIC DNA]</scope>
</reference>
<reference key="6">
    <citation type="submission" date="2005-09" db="EMBL/GenBank/DDBJ databases">
        <authorList>
            <person name="Mural R.J."/>
            <person name="Istrail S."/>
            <person name="Sutton G.G."/>
            <person name="Florea L."/>
            <person name="Halpern A.L."/>
            <person name="Mobarry C.M."/>
            <person name="Lippert R."/>
            <person name="Walenz B."/>
            <person name="Shatkay H."/>
            <person name="Dew I."/>
            <person name="Miller J.R."/>
            <person name="Flanigan M.J."/>
            <person name="Edwards N.J."/>
            <person name="Bolanos R."/>
            <person name="Fasulo D."/>
            <person name="Halldorsson B.V."/>
            <person name="Hannenhalli S."/>
            <person name="Turner R."/>
            <person name="Yooseph S."/>
            <person name="Lu F."/>
            <person name="Nusskern D.R."/>
            <person name="Shue B.C."/>
            <person name="Zheng X.H."/>
            <person name="Zhong F."/>
            <person name="Delcher A.L."/>
            <person name="Huson D.H."/>
            <person name="Kravitz S.A."/>
            <person name="Mouchard L."/>
            <person name="Reinert K."/>
            <person name="Remington K.A."/>
            <person name="Clark A.G."/>
            <person name="Waterman M.S."/>
            <person name="Eichler E.E."/>
            <person name="Adams M.D."/>
            <person name="Hunkapiller M.W."/>
            <person name="Myers E.W."/>
            <person name="Venter J.C."/>
        </authorList>
    </citation>
    <scope>NUCLEOTIDE SEQUENCE [LARGE SCALE GENOMIC DNA]</scope>
</reference>
<reference key="7">
    <citation type="journal article" date="2004" name="Genome Res.">
        <title>The status, quality, and expansion of the NIH full-length cDNA project: the Mammalian Gene Collection (MGC).</title>
        <authorList>
            <consortium name="The MGC Project Team"/>
        </authorList>
    </citation>
    <scope>NUCLEOTIDE SEQUENCE [LARGE SCALE MRNA]</scope>
    <scope>VARIANT LEU-209</scope>
</reference>
<reference key="8">
    <citation type="journal article" date="1997" name="Biochem. Biophys. Res. Commun.">
        <title>Glutamine235 and arginine272 in human melanocortin 5 receptor determines its low affinity to MSH.</title>
        <authorList>
            <person name="Fraendberg P.-A."/>
            <person name="Xu X."/>
            <person name="Chhajlani V."/>
        </authorList>
    </citation>
    <scope>MUTAGENESIS OF GLN-235 AND ARG-272</scope>
</reference>
<reference key="9">
    <citation type="journal article" date="2001" name="J. Invest. Dermatol.">
        <title>Expression, candidate gene, and population studies of the melanocortin 5 receptor.</title>
        <authorList>
            <person name="Hatta N."/>
            <person name="Dixon C."/>
            <person name="Ray A.J."/>
            <person name="Phillips S.R."/>
            <person name="Cunliffe W.J."/>
            <person name="Dale M."/>
            <person name="Todd C."/>
            <person name="Meggit S."/>
            <person name="Birch-MacHin M.A."/>
            <person name="Rees J.L."/>
        </authorList>
    </citation>
    <scope>VARIANT LEU-209</scope>
</reference>
<dbReference type="EMBL" id="Z25470">
    <property type="protein sequence ID" value="CAA80962.1"/>
    <property type="molecule type" value="Genomic_DNA"/>
</dbReference>
<dbReference type="EMBL" id="L27080">
    <property type="protein sequence ID" value="AAA59566.1"/>
    <property type="molecule type" value="Genomic_DNA"/>
</dbReference>
<dbReference type="EMBL" id="U08353">
    <property type="protein sequence ID" value="AAB60376.1"/>
    <property type="molecule type" value="Genomic_DNA"/>
</dbReference>
<dbReference type="EMBL" id="AY268429">
    <property type="protein sequence ID" value="AAP23196.1"/>
    <property type="molecule type" value="Genomic_DNA"/>
</dbReference>
<dbReference type="EMBL" id="EF444993">
    <property type="protein sequence ID" value="ACA06012.1"/>
    <property type="molecule type" value="Genomic_DNA"/>
</dbReference>
<dbReference type="EMBL" id="CH471113">
    <property type="protein sequence ID" value="EAX01504.1"/>
    <property type="molecule type" value="Genomic_DNA"/>
</dbReference>
<dbReference type="EMBL" id="BC069153">
    <property type="protein sequence ID" value="AAH69153.1"/>
    <property type="molecule type" value="mRNA"/>
</dbReference>
<dbReference type="EMBL" id="BC069545">
    <property type="protein sequence ID" value="AAH69545.1"/>
    <property type="molecule type" value="mRNA"/>
</dbReference>
<dbReference type="EMBL" id="BC095531">
    <property type="protein sequence ID" value="AAH95531.1"/>
    <property type="molecule type" value="mRNA"/>
</dbReference>
<dbReference type="CCDS" id="CCDS11868.1"/>
<dbReference type="PIR" id="JC5592">
    <property type="entry name" value="JC5592"/>
</dbReference>
<dbReference type="PIR" id="JN0764">
    <property type="entry name" value="JN0764"/>
</dbReference>
<dbReference type="RefSeq" id="NP_005904.1">
    <property type="nucleotide sequence ID" value="NM_005913.3"/>
</dbReference>
<dbReference type="PDB" id="8INR">
    <property type="method" value="EM"/>
    <property type="resolution" value="2.73 A"/>
    <property type="chains" value="R=2-325"/>
</dbReference>
<dbReference type="PDB" id="8IOD">
    <property type="method" value="EM"/>
    <property type="resolution" value="2.59 A"/>
    <property type="chains" value="R=2-325"/>
</dbReference>
<dbReference type="PDBsum" id="8INR"/>
<dbReference type="PDBsum" id="8IOD"/>
<dbReference type="EMDB" id="EMD-35601"/>
<dbReference type="EMDB" id="EMD-35616"/>
<dbReference type="SMR" id="P33032"/>
<dbReference type="BioGRID" id="110331">
    <property type="interactions" value="1"/>
</dbReference>
<dbReference type="CORUM" id="P33032"/>
<dbReference type="DIP" id="DIP-48792N"/>
<dbReference type="FunCoup" id="P33032">
    <property type="interactions" value="1026"/>
</dbReference>
<dbReference type="IntAct" id="P33032">
    <property type="interactions" value="2"/>
</dbReference>
<dbReference type="STRING" id="9606.ENSP00000468086"/>
<dbReference type="BindingDB" id="P33032"/>
<dbReference type="ChEMBL" id="CHEMBL4608"/>
<dbReference type="DrugBank" id="DB11653">
    <property type="generic name" value="Bremelanotide"/>
</dbReference>
<dbReference type="DrugCentral" id="P33032"/>
<dbReference type="GuidetoPHARMACOLOGY" id="286"/>
<dbReference type="GlyCosmos" id="P33032">
    <property type="glycosylation" value="4 sites, No reported glycans"/>
</dbReference>
<dbReference type="GlyGen" id="P33032">
    <property type="glycosylation" value="4 sites"/>
</dbReference>
<dbReference type="iPTMnet" id="P33032"/>
<dbReference type="PhosphoSitePlus" id="P33032"/>
<dbReference type="BioMuta" id="MC5R"/>
<dbReference type="DMDM" id="729996"/>
<dbReference type="PaxDb" id="9606-ENSP00000318077"/>
<dbReference type="Antibodypedia" id="7155">
    <property type="antibodies" value="412 antibodies from 36 providers"/>
</dbReference>
<dbReference type="DNASU" id="4161"/>
<dbReference type="Ensembl" id="ENST00000324750.5">
    <property type="protein sequence ID" value="ENSP00000318077.3"/>
    <property type="gene ID" value="ENSG00000176136.6"/>
</dbReference>
<dbReference type="Ensembl" id="ENST00000589410.2">
    <property type="protein sequence ID" value="ENSP00000468086.2"/>
    <property type="gene ID" value="ENSG00000176136.6"/>
</dbReference>
<dbReference type="GeneID" id="4161"/>
<dbReference type="KEGG" id="hsa:4161"/>
<dbReference type="MANE-Select" id="ENST00000589410.2">
    <property type="protein sequence ID" value="ENSP00000468086.2"/>
    <property type="RefSeq nucleotide sequence ID" value="NM_005913.3"/>
    <property type="RefSeq protein sequence ID" value="NP_005904.1"/>
</dbReference>
<dbReference type="UCSC" id="uc010xaf.3">
    <property type="organism name" value="human"/>
</dbReference>
<dbReference type="AGR" id="HGNC:6933"/>
<dbReference type="CTD" id="4161"/>
<dbReference type="DisGeNET" id="4161"/>
<dbReference type="GeneCards" id="MC5R"/>
<dbReference type="HGNC" id="HGNC:6933">
    <property type="gene designation" value="MC5R"/>
</dbReference>
<dbReference type="HPA" id="ENSG00000176136">
    <property type="expression patterns" value="Tissue enhanced (epididymis, lymphoid tissue)"/>
</dbReference>
<dbReference type="MIM" id="600042">
    <property type="type" value="gene"/>
</dbReference>
<dbReference type="neXtProt" id="NX_P33032"/>
<dbReference type="OpenTargets" id="ENSG00000176136"/>
<dbReference type="PharmGKB" id="PA30677"/>
<dbReference type="VEuPathDB" id="HostDB:ENSG00000176136"/>
<dbReference type="eggNOG" id="KOG3656">
    <property type="taxonomic scope" value="Eukaryota"/>
</dbReference>
<dbReference type="GeneTree" id="ENSGT01120000271819"/>
<dbReference type="HOGENOM" id="CLU_009579_13_0_1"/>
<dbReference type="InParanoid" id="P33032"/>
<dbReference type="OMA" id="WIFCTGC"/>
<dbReference type="OrthoDB" id="5970330at2759"/>
<dbReference type="PAN-GO" id="P33032">
    <property type="GO annotations" value="5 GO annotations based on evolutionary models"/>
</dbReference>
<dbReference type="PhylomeDB" id="P33032"/>
<dbReference type="TreeFam" id="TF332646"/>
<dbReference type="PathwayCommons" id="P33032"/>
<dbReference type="Reactome" id="R-HSA-375276">
    <property type="pathway name" value="Peptide ligand-binding receptors"/>
</dbReference>
<dbReference type="Reactome" id="R-HSA-418555">
    <property type="pathway name" value="G alpha (s) signalling events"/>
</dbReference>
<dbReference type="Reactome" id="R-HSA-9856649">
    <property type="pathway name" value="Transcriptional and post-translational regulation of MITF-M expression and activity"/>
</dbReference>
<dbReference type="SignaLink" id="P33032"/>
<dbReference type="SIGNOR" id="P33032"/>
<dbReference type="BioGRID-ORCS" id="4161">
    <property type="hits" value="8 hits in 1135 CRISPR screens"/>
</dbReference>
<dbReference type="GeneWiki" id="Melanocortin_5_receptor"/>
<dbReference type="GenomeRNAi" id="4161"/>
<dbReference type="Pharos" id="P33032">
    <property type="development level" value="Tchem"/>
</dbReference>
<dbReference type="PRO" id="PR:P33032"/>
<dbReference type="Proteomes" id="UP000005640">
    <property type="component" value="Chromosome 18"/>
</dbReference>
<dbReference type="RNAct" id="P33032">
    <property type="molecule type" value="protein"/>
</dbReference>
<dbReference type="Bgee" id="ENSG00000176136">
    <property type="expression patterns" value="Expressed in primordial germ cell in gonad and 39 other cell types or tissues"/>
</dbReference>
<dbReference type="GO" id="GO:0005737">
    <property type="term" value="C:cytoplasm"/>
    <property type="evidence" value="ECO:0000318"/>
    <property type="project" value="GO_Central"/>
</dbReference>
<dbReference type="GO" id="GO:0005886">
    <property type="term" value="C:plasma membrane"/>
    <property type="evidence" value="ECO:0000314"/>
    <property type="project" value="HPA"/>
</dbReference>
<dbReference type="GO" id="GO:0042562">
    <property type="term" value="F:hormone binding"/>
    <property type="evidence" value="ECO:0007669"/>
    <property type="project" value="Ensembl"/>
</dbReference>
<dbReference type="GO" id="GO:0004977">
    <property type="term" value="F:melanocortin receptor activity"/>
    <property type="evidence" value="ECO:0000318"/>
    <property type="project" value="GO_Central"/>
</dbReference>
<dbReference type="GO" id="GO:0007189">
    <property type="term" value="P:adenylate cyclase-activating G protein-coupled receptor signaling pathway"/>
    <property type="evidence" value="ECO:0000314"/>
    <property type="project" value="BHF-UCL"/>
</dbReference>
<dbReference type="GO" id="GO:0007187">
    <property type="term" value="P:G protein-coupled receptor signaling pathway, coupled to cyclic nucleotide second messenger"/>
    <property type="evidence" value="ECO:0000304"/>
    <property type="project" value="ProtInc"/>
</dbReference>
<dbReference type="GO" id="GO:0019222">
    <property type="term" value="P:regulation of metabolic process"/>
    <property type="evidence" value="ECO:0000318"/>
    <property type="project" value="GO_Central"/>
</dbReference>
<dbReference type="CDD" id="cd15354">
    <property type="entry name" value="7tmA_MC5R"/>
    <property type="match status" value="1"/>
</dbReference>
<dbReference type="FunFam" id="1.20.1070.10:FF:000077">
    <property type="entry name" value="Melanocortin receptor 4"/>
    <property type="match status" value="1"/>
</dbReference>
<dbReference type="Gene3D" id="1.20.1070.10">
    <property type="entry name" value="Rhodopsin 7-helix transmembrane proteins"/>
    <property type="match status" value="1"/>
</dbReference>
<dbReference type="InterPro" id="IPR000276">
    <property type="entry name" value="GPCR_Rhodpsn"/>
</dbReference>
<dbReference type="InterPro" id="IPR017452">
    <property type="entry name" value="GPCR_Rhodpsn_7TM"/>
</dbReference>
<dbReference type="InterPro" id="IPR001908">
    <property type="entry name" value="MC3-5R"/>
</dbReference>
<dbReference type="InterPro" id="IPR000621">
    <property type="entry name" value="Melancort_rcpt_5"/>
</dbReference>
<dbReference type="InterPro" id="IPR001671">
    <property type="entry name" value="Melcrt_ACTH_rcpt"/>
</dbReference>
<dbReference type="PANTHER" id="PTHR22750">
    <property type="entry name" value="G-PROTEIN COUPLED RECEPTOR"/>
    <property type="match status" value="1"/>
</dbReference>
<dbReference type="Pfam" id="PF00001">
    <property type="entry name" value="7tm_1"/>
    <property type="match status" value="1"/>
</dbReference>
<dbReference type="PRINTS" id="PR00237">
    <property type="entry name" value="GPCRRHODOPSN"/>
</dbReference>
<dbReference type="PRINTS" id="PR00534">
    <property type="entry name" value="MCRFAMILY"/>
</dbReference>
<dbReference type="PRINTS" id="PR00535">
    <property type="entry name" value="MELNOCORTINR"/>
</dbReference>
<dbReference type="PRINTS" id="PR01063">
    <property type="entry name" value="MELNOCORTN5R"/>
</dbReference>
<dbReference type="SMART" id="SM01381">
    <property type="entry name" value="7TM_GPCR_Srsx"/>
    <property type="match status" value="1"/>
</dbReference>
<dbReference type="SUPFAM" id="SSF81321">
    <property type="entry name" value="Family A G protein-coupled receptor-like"/>
    <property type="match status" value="1"/>
</dbReference>
<dbReference type="PROSITE" id="PS00237">
    <property type="entry name" value="G_PROTEIN_RECEP_F1_1"/>
    <property type="match status" value="1"/>
</dbReference>
<dbReference type="PROSITE" id="PS50262">
    <property type="entry name" value="G_PROTEIN_RECEP_F1_2"/>
    <property type="match status" value="1"/>
</dbReference>
<name>MC5R_HUMAN</name>
<evidence type="ECO:0000255" key="1"/>
<evidence type="ECO:0000255" key="2">
    <source>
        <dbReference type="PROSITE-ProRule" id="PRU00521"/>
    </source>
</evidence>
<evidence type="ECO:0000269" key="3">
    <source>
    </source>
</evidence>
<evidence type="ECO:0000269" key="4">
    <source>
    </source>
</evidence>
<evidence type="ECO:0000269" key="5">
    <source>
    </source>
</evidence>
<evidence type="ECO:0000305" key="6"/>
<evidence type="ECO:0007829" key="7">
    <source>
        <dbReference type="PDB" id="8INR"/>
    </source>
</evidence>
<evidence type="ECO:0007829" key="8">
    <source>
        <dbReference type="PDB" id="8IOD"/>
    </source>
</evidence>
<comment type="function">
    <text>Receptor for MSH (alpha, beta and gamma) and ACTH. The activity of this receptor is mediated by G proteins which activate adenylate cyclase. This receptor is a possible mediator of the immunomodulation properties of melanocortins.</text>
</comment>
<comment type="interaction">
    <interactant intactId="EBI-9538507">
        <id>P33032</id>
    </interactant>
    <interactant intactId="EBI-9538727">
        <id>Q8TCY5</id>
        <label>MRAP</label>
    </interactant>
    <organismsDiffer>false</organismsDiffer>
    <experiments>2</experiments>
</comment>
<comment type="subcellular location">
    <subcellularLocation>
        <location>Cell membrane</location>
        <topology>Multi-pass membrane protein</topology>
    </subcellularLocation>
</comment>
<comment type="tissue specificity">
    <text>Expressed in the brain but not in the melanoma cells.</text>
</comment>
<comment type="similarity">
    <text evidence="2">Belongs to the G-protein coupled receptor 1 family.</text>
</comment>
<comment type="online information" name="Wikipedia">
    <link uri="https://en.wikipedia.org/wiki/Melanocortin_receptor"/>
    <text>Melanocortin receptor entry</text>
</comment>
<accession>P33032</accession>
<accession>B0YJ34</accession>
<accession>Q502V1</accession>
<organism>
    <name type="scientific">Homo sapiens</name>
    <name type="common">Human</name>
    <dbReference type="NCBI Taxonomy" id="9606"/>
    <lineage>
        <taxon>Eukaryota</taxon>
        <taxon>Metazoa</taxon>
        <taxon>Chordata</taxon>
        <taxon>Craniata</taxon>
        <taxon>Vertebrata</taxon>
        <taxon>Euteleostomi</taxon>
        <taxon>Mammalia</taxon>
        <taxon>Eutheria</taxon>
        <taxon>Euarchontoglires</taxon>
        <taxon>Primates</taxon>
        <taxon>Haplorrhini</taxon>
        <taxon>Catarrhini</taxon>
        <taxon>Hominidae</taxon>
        <taxon>Homo</taxon>
    </lineage>
</organism>
<protein>
    <recommendedName>
        <fullName>Melanocortin receptor 5</fullName>
        <shortName>MC5-R</shortName>
    </recommendedName>
    <alternativeName>
        <fullName>MC-2</fullName>
    </alternativeName>
</protein>
<gene>
    <name type="primary">MC5R</name>
</gene>